<feature type="chain" id="PRO_0000403048" description="FMN reductase (NADH) RutF">
    <location>
        <begin position="1"/>
        <end position="181"/>
    </location>
</feature>
<name>RUTF_ANCN5</name>
<accession>D7A989</accession>
<sequence length="181" mass="18490">MARSAPLDETNSGAAKAPAISREQYRDAMARLGAAVTIVTTDGPGGRAGFTASAVCSVTDSPPTLLVCLNKSSSAAHAVHANGVVCVNTLAAGHEALSNLFGGRTPPEERFAAGQWHTSATGAPILVGAVVAFDCRIVKTVEVGTHDVLFCEVVGLAEGGGREGLIYFSRRYHAVAGTPEG</sequence>
<gene>
    <name evidence="1" type="primary">rutF</name>
    <name type="ordered locus">Snov_3377</name>
</gene>
<comment type="function">
    <text evidence="1">Catalyzes the reduction of FMN to FMNH2 which is used to reduce pyrimidine by RutA via the Rut pathway.</text>
</comment>
<comment type="catalytic activity">
    <reaction evidence="1">
        <text>FMNH2 + NAD(+) = FMN + NADH + 2 H(+)</text>
        <dbReference type="Rhea" id="RHEA:21620"/>
        <dbReference type="ChEBI" id="CHEBI:15378"/>
        <dbReference type="ChEBI" id="CHEBI:57540"/>
        <dbReference type="ChEBI" id="CHEBI:57618"/>
        <dbReference type="ChEBI" id="CHEBI:57945"/>
        <dbReference type="ChEBI" id="CHEBI:58210"/>
        <dbReference type="EC" id="1.5.1.42"/>
    </reaction>
</comment>
<comment type="similarity">
    <text evidence="1">Belongs to the non-flavoprotein flavin reductase family. RutF subfamily.</text>
</comment>
<reference key="1">
    <citation type="journal article" date="2012" name="Stand. Genomic Sci.">
        <title>Complete genome sequence of the facultatively chemolithoautotrophic and methylotrophic alpha Proteobacterium Starkeya novella type strain (ATCC 8093(T)).</title>
        <authorList>
            <person name="Kappler U."/>
            <person name="Davenport K."/>
            <person name="Beatson S."/>
            <person name="Lucas S."/>
            <person name="Lapidus A."/>
            <person name="Copeland A."/>
            <person name="Berry K.W."/>
            <person name="Glavina Del Rio T."/>
            <person name="Hammon N."/>
            <person name="Dalin E."/>
            <person name="Tice H."/>
            <person name="Pitluck S."/>
            <person name="Richardson P."/>
            <person name="Bruce D."/>
            <person name="Goodwin L.A."/>
            <person name="Han C."/>
            <person name="Tapia R."/>
            <person name="Detter J.C."/>
            <person name="Chang Y.J."/>
            <person name="Jeffries C.D."/>
            <person name="Land M."/>
            <person name="Hauser L."/>
            <person name="Kyrpides N.C."/>
            <person name="Goker M."/>
            <person name="Ivanova N."/>
            <person name="Klenk H.P."/>
            <person name="Woyke T."/>
        </authorList>
    </citation>
    <scope>NUCLEOTIDE SEQUENCE [LARGE SCALE GENOMIC DNA]</scope>
    <source>
        <strain>ATCC 8093 / DSM 506 / JCM 20403 / CCM 1077 / IAM 12100 / NBRC 12443 / NCIMB 10456</strain>
    </source>
</reference>
<dbReference type="EC" id="1.5.1.42" evidence="1"/>
<dbReference type="EMBL" id="CP002026">
    <property type="protein sequence ID" value="ADH90651.1"/>
    <property type="molecule type" value="Genomic_DNA"/>
</dbReference>
<dbReference type="RefSeq" id="WP_013168152.1">
    <property type="nucleotide sequence ID" value="NC_014217.1"/>
</dbReference>
<dbReference type="SMR" id="D7A989"/>
<dbReference type="STRING" id="639283.Snov_3377"/>
<dbReference type="KEGG" id="sno:Snov_3377"/>
<dbReference type="eggNOG" id="COG1853">
    <property type="taxonomic scope" value="Bacteria"/>
</dbReference>
<dbReference type="HOGENOM" id="CLU_059021_2_2_5"/>
<dbReference type="OrthoDB" id="9789254at2"/>
<dbReference type="Proteomes" id="UP000006633">
    <property type="component" value="Chromosome"/>
</dbReference>
<dbReference type="GO" id="GO:0010181">
    <property type="term" value="F:FMN binding"/>
    <property type="evidence" value="ECO:0007669"/>
    <property type="project" value="InterPro"/>
</dbReference>
<dbReference type="GO" id="GO:0052874">
    <property type="term" value="F:FMN reductase (NADH) activity"/>
    <property type="evidence" value="ECO:0007669"/>
    <property type="project" value="UniProtKB-EC"/>
</dbReference>
<dbReference type="GO" id="GO:0008752">
    <property type="term" value="F:FMN reductase [NAD(P)H] activity"/>
    <property type="evidence" value="ECO:0007669"/>
    <property type="project" value="InterPro"/>
</dbReference>
<dbReference type="GO" id="GO:0042602">
    <property type="term" value="F:riboflavin reductase (NADPH) activity"/>
    <property type="evidence" value="ECO:0007669"/>
    <property type="project" value="UniProtKB-UniRule"/>
</dbReference>
<dbReference type="GO" id="GO:0019740">
    <property type="term" value="P:nitrogen utilization"/>
    <property type="evidence" value="ECO:0007669"/>
    <property type="project" value="UniProtKB-UniRule"/>
</dbReference>
<dbReference type="GO" id="GO:0006212">
    <property type="term" value="P:uracil catabolic process"/>
    <property type="evidence" value="ECO:0007669"/>
    <property type="project" value="UniProtKB-UniRule"/>
</dbReference>
<dbReference type="Gene3D" id="2.30.110.10">
    <property type="entry name" value="Electron Transport, Fmn-binding Protein, Chain A"/>
    <property type="match status" value="1"/>
</dbReference>
<dbReference type="HAMAP" id="MF_00833">
    <property type="entry name" value="RutF"/>
    <property type="match status" value="1"/>
</dbReference>
<dbReference type="InterPro" id="IPR002563">
    <property type="entry name" value="Flavin_Rdtase-like_dom"/>
</dbReference>
<dbReference type="InterPro" id="IPR050268">
    <property type="entry name" value="NADH-dep_flavin_reductase"/>
</dbReference>
<dbReference type="InterPro" id="IPR019917">
    <property type="entry name" value="RutF"/>
</dbReference>
<dbReference type="InterPro" id="IPR012349">
    <property type="entry name" value="Split_barrel_FMN-bd"/>
</dbReference>
<dbReference type="PANTHER" id="PTHR30466">
    <property type="entry name" value="FLAVIN REDUCTASE"/>
    <property type="match status" value="1"/>
</dbReference>
<dbReference type="PANTHER" id="PTHR30466:SF1">
    <property type="entry name" value="FMN REDUCTASE (NADH) RUTF"/>
    <property type="match status" value="1"/>
</dbReference>
<dbReference type="Pfam" id="PF01613">
    <property type="entry name" value="Flavin_Reduct"/>
    <property type="match status" value="1"/>
</dbReference>
<dbReference type="SMART" id="SM00903">
    <property type="entry name" value="Flavin_Reduct"/>
    <property type="match status" value="1"/>
</dbReference>
<dbReference type="SUPFAM" id="SSF50475">
    <property type="entry name" value="FMN-binding split barrel"/>
    <property type="match status" value="1"/>
</dbReference>
<organism>
    <name type="scientific">Ancylobacter novellus (strain ATCC 8093 / DSM 506 / JCM 20403 / CCM 1077 / IAM 12100 / NBRC 12443 / NCIMB 10456)</name>
    <name type="common">Starkeya novella</name>
    <dbReference type="NCBI Taxonomy" id="639283"/>
    <lineage>
        <taxon>Bacteria</taxon>
        <taxon>Pseudomonadati</taxon>
        <taxon>Pseudomonadota</taxon>
        <taxon>Alphaproteobacteria</taxon>
        <taxon>Hyphomicrobiales</taxon>
        <taxon>Xanthobacteraceae</taxon>
        <taxon>Ancylobacter</taxon>
    </lineage>
</organism>
<proteinExistence type="inferred from homology"/>
<keyword id="KW-0285">Flavoprotein</keyword>
<keyword id="KW-0288">FMN</keyword>
<keyword id="KW-0520">NAD</keyword>
<keyword id="KW-0560">Oxidoreductase</keyword>
<protein>
    <recommendedName>
        <fullName evidence="1">FMN reductase (NADH) RutF</fullName>
        <ecNumber evidence="1">1.5.1.42</ecNumber>
    </recommendedName>
    <alternativeName>
        <fullName evidence="1">FMN reductase</fullName>
    </alternativeName>
    <alternativeName>
        <fullName evidence="1">NADH-flavin reductase RutF</fullName>
    </alternativeName>
    <alternativeName>
        <fullName evidence="1">NADH:flavin oxidoreductase</fullName>
    </alternativeName>
</protein>
<evidence type="ECO:0000255" key="1">
    <source>
        <dbReference type="HAMAP-Rule" id="MF_00833"/>
    </source>
</evidence>